<keyword id="KW-1185">Reference proteome</keyword>
<accession>P75584</accession>
<protein>
    <recommendedName>
        <fullName>Uncharacterized protein MG148 homolog</fullName>
    </recommendedName>
</protein>
<feature type="chain" id="PRO_0000210445" description="Uncharacterized protein MG148 homolog">
    <location>
        <begin position="1"/>
        <end position="445"/>
    </location>
</feature>
<feature type="region of interest" description="Disordered" evidence="1">
    <location>
        <begin position="139"/>
        <end position="160"/>
    </location>
</feature>
<name>Y161_MYCPN</name>
<evidence type="ECO:0000256" key="1">
    <source>
        <dbReference type="SAM" id="MobiDB-lite"/>
    </source>
</evidence>
<sequence length="445" mass="52867">MSDVKYLQVEIVDKNTIRLQEDGKKGQQIRLDQIIKVDQSNILNTLEQAQREAYEREAQSRYQTKLAKELSEKDNTFLKQKAAWNQAHNTQIQQLYQQITNLENQVNNIKRETESKKDNEYQQQIVKLETQLQSIKKETESQKDLEYERKANKTKEENQQELERQRQYFLEQLEQAQKDIEELKTREERFSKWAIAKKGKELEKWCWEAYKNYEELFQNCVFAPYSELVKGAKKSIGVEDDESNINEKADFIFQVFNPNNDKEPFFSICCEMKTEFTESKSRTKNEDHVKKLIADAKRAKCQYGFLVSELELNTENDVQVQRMHTSNSEVEVYLVRPMFFIVMLRLFYFLAKKMFAQVDVNSEYLDKEALNASFSDLKKSLLEKTFTDLNKVFQNNIDELEKIEGLVTKLKAANEKALNSRLNNWEEKIRKFEFKLNKDIVKKLE</sequence>
<proteinExistence type="predicted"/>
<reference key="1">
    <citation type="journal article" date="1996" name="Nucleic Acids Res.">
        <title>Complete sequence analysis of the genome of the bacterium Mycoplasma pneumoniae.</title>
        <authorList>
            <person name="Himmelreich R."/>
            <person name="Hilbert H."/>
            <person name="Plagens H."/>
            <person name="Pirkl E."/>
            <person name="Li B.-C."/>
            <person name="Herrmann R."/>
        </authorList>
    </citation>
    <scope>NUCLEOTIDE SEQUENCE [LARGE SCALE GENOMIC DNA]</scope>
    <source>
        <strain>ATCC 29342 / M129 / Subtype 1</strain>
    </source>
</reference>
<dbReference type="EMBL" id="U00089">
    <property type="protein sequence ID" value="AAB96318.1"/>
    <property type="molecule type" value="Genomic_DNA"/>
</dbReference>
<dbReference type="PIR" id="S73996">
    <property type="entry name" value="S73996"/>
</dbReference>
<dbReference type="RefSeq" id="NP_109849.1">
    <property type="nucleotide sequence ID" value="NC_000912.1"/>
</dbReference>
<dbReference type="RefSeq" id="WP_010874518.1">
    <property type="nucleotide sequence ID" value="NZ_OU342337.1"/>
</dbReference>
<dbReference type="SMR" id="P75584"/>
<dbReference type="STRING" id="272634.MPN_161"/>
<dbReference type="EnsemblBacteria" id="AAB96318">
    <property type="protein sequence ID" value="AAB96318"/>
    <property type="gene ID" value="MPN_161"/>
</dbReference>
<dbReference type="KEGG" id="mpn:MPN_161"/>
<dbReference type="PATRIC" id="fig|272634.6.peg.179"/>
<dbReference type="HOGENOM" id="CLU_034837_1_0_14"/>
<dbReference type="OrthoDB" id="3224137at2"/>
<dbReference type="BioCyc" id="MPNE272634:G1GJ3-270-MONOMER"/>
<dbReference type="Proteomes" id="UP000000808">
    <property type="component" value="Chromosome"/>
</dbReference>
<dbReference type="InterPro" id="IPR019219">
    <property type="entry name" value="DUF2130"/>
</dbReference>
<dbReference type="Pfam" id="PF09903">
    <property type="entry name" value="DUF2130"/>
    <property type="match status" value="1"/>
</dbReference>
<dbReference type="PIRSF" id="PIRSF005850">
    <property type="entry name" value="UCP005850"/>
    <property type="match status" value="1"/>
</dbReference>
<organism>
    <name type="scientific">Mycoplasma pneumoniae (strain ATCC 29342 / M129 / Subtype 1)</name>
    <name type="common">Mycoplasmoides pneumoniae</name>
    <dbReference type="NCBI Taxonomy" id="272634"/>
    <lineage>
        <taxon>Bacteria</taxon>
        <taxon>Bacillati</taxon>
        <taxon>Mycoplasmatota</taxon>
        <taxon>Mycoplasmoidales</taxon>
        <taxon>Mycoplasmoidaceae</taxon>
        <taxon>Mycoplasmoides</taxon>
    </lineage>
</organism>
<gene>
    <name type="ordered locus">MPN_161</name>
    <name type="ORF">MP670</name>
    <name type="ORF">VXpSPT7_orf445</name>
</gene>